<keyword id="KW-0413">Isomerase</keyword>
<keyword id="KW-0663">Pyridoxal phosphate</keyword>
<dbReference type="EC" id="5.1.1.1" evidence="1"/>
<dbReference type="EMBL" id="CR628337">
    <property type="protein sequence ID" value="CAH15009.1"/>
    <property type="molecule type" value="Genomic_DNA"/>
</dbReference>
<dbReference type="RefSeq" id="WP_011214944.1">
    <property type="nucleotide sequence ID" value="NC_006369.1"/>
</dbReference>
<dbReference type="SMR" id="Q5WYG1"/>
<dbReference type="KEGG" id="lpf:lpl0775"/>
<dbReference type="LegioList" id="lpl0775"/>
<dbReference type="HOGENOM" id="CLU_028393_1_0_6"/>
<dbReference type="UniPathway" id="UPA00042">
    <property type="reaction ID" value="UER00497"/>
</dbReference>
<dbReference type="Proteomes" id="UP000002517">
    <property type="component" value="Chromosome"/>
</dbReference>
<dbReference type="GO" id="GO:0005829">
    <property type="term" value="C:cytosol"/>
    <property type="evidence" value="ECO:0007669"/>
    <property type="project" value="TreeGrafter"/>
</dbReference>
<dbReference type="GO" id="GO:0008784">
    <property type="term" value="F:alanine racemase activity"/>
    <property type="evidence" value="ECO:0007669"/>
    <property type="project" value="UniProtKB-UniRule"/>
</dbReference>
<dbReference type="GO" id="GO:0030170">
    <property type="term" value="F:pyridoxal phosphate binding"/>
    <property type="evidence" value="ECO:0007669"/>
    <property type="project" value="UniProtKB-UniRule"/>
</dbReference>
<dbReference type="GO" id="GO:0030632">
    <property type="term" value="P:D-alanine biosynthetic process"/>
    <property type="evidence" value="ECO:0007669"/>
    <property type="project" value="UniProtKB-UniRule"/>
</dbReference>
<dbReference type="CDD" id="cd06827">
    <property type="entry name" value="PLPDE_III_AR_proteobact"/>
    <property type="match status" value="1"/>
</dbReference>
<dbReference type="FunFam" id="3.20.20.10:FF:000002">
    <property type="entry name" value="Alanine racemase"/>
    <property type="match status" value="1"/>
</dbReference>
<dbReference type="Gene3D" id="3.20.20.10">
    <property type="entry name" value="Alanine racemase"/>
    <property type="match status" value="1"/>
</dbReference>
<dbReference type="Gene3D" id="2.40.37.10">
    <property type="entry name" value="Lyase, Ornithine Decarboxylase, Chain A, domain 1"/>
    <property type="match status" value="1"/>
</dbReference>
<dbReference type="HAMAP" id="MF_01201">
    <property type="entry name" value="Ala_racemase"/>
    <property type="match status" value="1"/>
</dbReference>
<dbReference type="InterPro" id="IPR000821">
    <property type="entry name" value="Ala_racemase"/>
</dbReference>
<dbReference type="InterPro" id="IPR009006">
    <property type="entry name" value="Ala_racemase/Decarboxylase_C"/>
</dbReference>
<dbReference type="InterPro" id="IPR011079">
    <property type="entry name" value="Ala_racemase_C"/>
</dbReference>
<dbReference type="InterPro" id="IPR001608">
    <property type="entry name" value="Ala_racemase_N"/>
</dbReference>
<dbReference type="InterPro" id="IPR029066">
    <property type="entry name" value="PLP-binding_barrel"/>
</dbReference>
<dbReference type="NCBIfam" id="TIGR00492">
    <property type="entry name" value="alr"/>
    <property type="match status" value="1"/>
</dbReference>
<dbReference type="PANTHER" id="PTHR30511">
    <property type="entry name" value="ALANINE RACEMASE"/>
    <property type="match status" value="1"/>
</dbReference>
<dbReference type="PANTHER" id="PTHR30511:SF0">
    <property type="entry name" value="ALANINE RACEMASE, CATABOLIC-RELATED"/>
    <property type="match status" value="1"/>
</dbReference>
<dbReference type="Pfam" id="PF00842">
    <property type="entry name" value="Ala_racemase_C"/>
    <property type="match status" value="1"/>
</dbReference>
<dbReference type="Pfam" id="PF01168">
    <property type="entry name" value="Ala_racemase_N"/>
    <property type="match status" value="1"/>
</dbReference>
<dbReference type="PRINTS" id="PR00992">
    <property type="entry name" value="ALARACEMASE"/>
</dbReference>
<dbReference type="SMART" id="SM01005">
    <property type="entry name" value="Ala_racemase_C"/>
    <property type="match status" value="1"/>
</dbReference>
<dbReference type="SUPFAM" id="SSF50621">
    <property type="entry name" value="Alanine racemase C-terminal domain-like"/>
    <property type="match status" value="1"/>
</dbReference>
<dbReference type="SUPFAM" id="SSF51419">
    <property type="entry name" value="PLP-binding barrel"/>
    <property type="match status" value="1"/>
</dbReference>
<protein>
    <recommendedName>
        <fullName evidence="1">Alanine racemase</fullName>
        <ecNumber evidence="1">5.1.1.1</ecNumber>
    </recommendedName>
</protein>
<evidence type="ECO:0000255" key="1">
    <source>
        <dbReference type="HAMAP-Rule" id="MF_01201"/>
    </source>
</evidence>
<name>ALR_LEGPL</name>
<sequence length="357" mass="39411">MSRPTRLVIEPSALLHNLSQIKHLAPGKKVIAMVKANAYGCGVREVAPVLDGRIEAFGVACLEEALAIRALGVETPCILFQGVFSSDELSVAVENDFACVLHHAKQLEWLIKTPLPYPIKVWVKVNTGMHRLGFKIHELQKVMDALQTCTWVDKNIGLMTHLACADEPHRPENQQQISLFQEISIPGFRQRSIANSAAIISFPDSQADVVRPGIMLYGVSPFANQNARDLGLIPVMRFMSAISAIHDNPSFAQVGYGGTWKSDKPSRIGIVAAGYGDGYPRHISEKTPVWVRGREVSIVGRVSMDMLTIDLTEHPDVEIGDEVELWGTHVLVERIAKSAGTIGYELLCQISERVRYK</sequence>
<reference key="1">
    <citation type="journal article" date="2004" name="Nat. Genet.">
        <title>Evidence in the Legionella pneumophila genome for exploitation of host cell functions and high genome plasticity.</title>
        <authorList>
            <person name="Cazalet C."/>
            <person name="Rusniok C."/>
            <person name="Brueggemann H."/>
            <person name="Zidane N."/>
            <person name="Magnier A."/>
            <person name="Ma L."/>
            <person name="Tichit M."/>
            <person name="Jarraud S."/>
            <person name="Bouchier C."/>
            <person name="Vandenesch F."/>
            <person name="Kunst F."/>
            <person name="Etienne J."/>
            <person name="Glaser P."/>
            <person name="Buchrieser C."/>
        </authorList>
    </citation>
    <scope>NUCLEOTIDE SEQUENCE [LARGE SCALE GENOMIC DNA]</scope>
    <source>
        <strain>Lens</strain>
    </source>
</reference>
<comment type="function">
    <text evidence="1">Catalyzes the interconversion of L-alanine and D-alanine. May also act on other amino acids.</text>
</comment>
<comment type="catalytic activity">
    <reaction evidence="1">
        <text>L-alanine = D-alanine</text>
        <dbReference type="Rhea" id="RHEA:20249"/>
        <dbReference type="ChEBI" id="CHEBI:57416"/>
        <dbReference type="ChEBI" id="CHEBI:57972"/>
        <dbReference type="EC" id="5.1.1.1"/>
    </reaction>
</comment>
<comment type="cofactor">
    <cofactor evidence="1">
        <name>pyridoxal 5'-phosphate</name>
        <dbReference type="ChEBI" id="CHEBI:597326"/>
    </cofactor>
</comment>
<comment type="pathway">
    <text evidence="1">Amino-acid biosynthesis; D-alanine biosynthesis; D-alanine from L-alanine: step 1/1.</text>
</comment>
<comment type="similarity">
    <text evidence="1">Belongs to the alanine racemase family.</text>
</comment>
<proteinExistence type="inferred from homology"/>
<organism>
    <name type="scientific">Legionella pneumophila (strain Lens)</name>
    <dbReference type="NCBI Taxonomy" id="297245"/>
    <lineage>
        <taxon>Bacteria</taxon>
        <taxon>Pseudomonadati</taxon>
        <taxon>Pseudomonadota</taxon>
        <taxon>Gammaproteobacteria</taxon>
        <taxon>Legionellales</taxon>
        <taxon>Legionellaceae</taxon>
        <taxon>Legionella</taxon>
    </lineage>
</organism>
<feature type="chain" id="PRO_1000138611" description="Alanine racemase">
    <location>
        <begin position="1"/>
        <end position="357"/>
    </location>
</feature>
<feature type="active site" description="Proton acceptor; specific for D-alanine" evidence="1">
    <location>
        <position position="35"/>
    </location>
</feature>
<feature type="active site" description="Proton acceptor; specific for L-alanine" evidence="1">
    <location>
        <position position="256"/>
    </location>
</feature>
<feature type="binding site" evidence="1">
    <location>
        <position position="131"/>
    </location>
    <ligand>
        <name>substrate</name>
    </ligand>
</feature>
<feature type="binding site" evidence="1">
    <location>
        <position position="304"/>
    </location>
    <ligand>
        <name>substrate</name>
    </ligand>
</feature>
<feature type="modified residue" description="N6-(pyridoxal phosphate)lysine" evidence="1">
    <location>
        <position position="35"/>
    </location>
</feature>
<accession>Q5WYG1</accession>
<gene>
    <name type="primary">alr</name>
    <name type="ordered locus">lpl0775</name>
</gene>